<name>ASTD_ENT38</name>
<reference key="1">
    <citation type="journal article" date="2010" name="PLoS Genet.">
        <title>Genome sequence of the plant growth promoting endophytic bacterium Enterobacter sp. 638.</title>
        <authorList>
            <person name="Taghavi S."/>
            <person name="van der Lelie D."/>
            <person name="Hoffman A."/>
            <person name="Zhang Y.B."/>
            <person name="Walla M.D."/>
            <person name="Vangronsveld J."/>
            <person name="Newman L."/>
            <person name="Monchy S."/>
        </authorList>
    </citation>
    <scope>NUCLEOTIDE SEQUENCE [LARGE SCALE GENOMIC DNA]</scope>
    <source>
        <strain>638</strain>
    </source>
</reference>
<proteinExistence type="inferred from homology"/>
<keyword id="KW-0056">Arginine metabolism</keyword>
<keyword id="KW-0520">NAD</keyword>
<keyword id="KW-0560">Oxidoreductase</keyword>
<evidence type="ECO:0000255" key="1">
    <source>
        <dbReference type="HAMAP-Rule" id="MF_01174"/>
    </source>
</evidence>
<gene>
    <name evidence="1" type="primary">astD</name>
    <name type="ordered locus">Ent638_1698</name>
</gene>
<accession>A4W9J7</accession>
<sequence>MSLWINGDWVTGEGERRVKTNPVGNEALWQGFDASPAQVEQACQAARKAFPAWAKLPFTARQAIVEKFATLLEANKAELTRVIARETGKPRWEATTEITAMINKITISVKAYHTRTGEQHTAMADGAATLRHRPHGVLAVFGPYNFPGHLPNGHIVPALLAGNTVIFKPSELTPWSGEAVVKLWEQAGLPPGVLNLVQGGRETGQALSALSDLDGLLFTGSAGTGYQLHRQLAGQPEKILALEMGGNNPLIVEDPEDIDAAVHLAIQSAFVTAGQRCTCARRLLVKNGAQGDAFLARLIEVTARLVPDAWDAEPQPFIGGLISEQAANNVIHAWREHVARGAKTLLEPKLVQPGTSLLTPGIIDMSDARDIPDEEVFGPLLCVWRYDDFDSAIAMANNTRYGLSSGLISPDREKFDQLLIEARAGIVNWNKPLTGAASTAPFGGVGASGNHRASAWYAADYCAWPMASLETPALTLPEALNPGLDFTQGNGHESA</sequence>
<feature type="chain" id="PRO_1000065756" description="N-succinylglutamate 5-semialdehyde dehydrogenase">
    <location>
        <begin position="1"/>
        <end position="495"/>
    </location>
</feature>
<feature type="active site" evidence="1">
    <location>
        <position position="243"/>
    </location>
</feature>
<feature type="active site" evidence="1">
    <location>
        <position position="277"/>
    </location>
</feature>
<feature type="binding site" evidence="1">
    <location>
        <begin position="220"/>
        <end position="225"/>
    </location>
    <ligand>
        <name>NAD(+)</name>
        <dbReference type="ChEBI" id="CHEBI:57540"/>
    </ligand>
</feature>
<comment type="function">
    <text evidence="1">Catalyzes the NAD-dependent reduction of succinylglutamate semialdehyde into succinylglutamate.</text>
</comment>
<comment type="catalytic activity">
    <reaction evidence="1">
        <text>N-succinyl-L-glutamate 5-semialdehyde + NAD(+) + H2O = N-succinyl-L-glutamate + NADH + 2 H(+)</text>
        <dbReference type="Rhea" id="RHEA:10812"/>
        <dbReference type="ChEBI" id="CHEBI:15377"/>
        <dbReference type="ChEBI" id="CHEBI:15378"/>
        <dbReference type="ChEBI" id="CHEBI:57540"/>
        <dbReference type="ChEBI" id="CHEBI:57945"/>
        <dbReference type="ChEBI" id="CHEBI:58520"/>
        <dbReference type="ChEBI" id="CHEBI:58763"/>
        <dbReference type="EC" id="1.2.1.71"/>
    </reaction>
</comment>
<comment type="pathway">
    <text evidence="1">Amino-acid degradation; L-arginine degradation via AST pathway; L-glutamate and succinate from L-arginine: step 4/5.</text>
</comment>
<comment type="similarity">
    <text evidence="1">Belongs to the aldehyde dehydrogenase family. AstD subfamily.</text>
</comment>
<dbReference type="EC" id="1.2.1.71" evidence="1"/>
<dbReference type="EMBL" id="CP000653">
    <property type="protein sequence ID" value="ABP60377.1"/>
    <property type="molecule type" value="Genomic_DNA"/>
</dbReference>
<dbReference type="RefSeq" id="WP_012017093.1">
    <property type="nucleotide sequence ID" value="NC_009436.1"/>
</dbReference>
<dbReference type="SMR" id="A4W9J7"/>
<dbReference type="STRING" id="399742.Ent638_1698"/>
<dbReference type="KEGG" id="ent:Ent638_1698"/>
<dbReference type="eggNOG" id="COG1012">
    <property type="taxonomic scope" value="Bacteria"/>
</dbReference>
<dbReference type="HOGENOM" id="CLU_005391_1_0_6"/>
<dbReference type="OrthoDB" id="9812625at2"/>
<dbReference type="UniPathway" id="UPA00185">
    <property type="reaction ID" value="UER00282"/>
</dbReference>
<dbReference type="Proteomes" id="UP000000230">
    <property type="component" value="Chromosome"/>
</dbReference>
<dbReference type="GO" id="GO:0043824">
    <property type="term" value="F:succinylglutamate-semialdehyde dehydrogenase activity"/>
    <property type="evidence" value="ECO:0007669"/>
    <property type="project" value="UniProtKB-EC"/>
</dbReference>
<dbReference type="GO" id="GO:0019544">
    <property type="term" value="P:arginine catabolic process to glutamate"/>
    <property type="evidence" value="ECO:0007669"/>
    <property type="project" value="UniProtKB-UniRule"/>
</dbReference>
<dbReference type="GO" id="GO:0019545">
    <property type="term" value="P:arginine catabolic process to succinate"/>
    <property type="evidence" value="ECO:0007669"/>
    <property type="project" value="UniProtKB-UniRule"/>
</dbReference>
<dbReference type="CDD" id="cd07095">
    <property type="entry name" value="ALDH_SGSD_AstD"/>
    <property type="match status" value="1"/>
</dbReference>
<dbReference type="FunFam" id="3.40.309.10:FF:000013">
    <property type="entry name" value="N-succinylglutamate 5-semialdehyde dehydrogenase"/>
    <property type="match status" value="1"/>
</dbReference>
<dbReference type="FunFam" id="3.40.605.10:FF:000010">
    <property type="entry name" value="N-succinylglutamate 5-semialdehyde dehydrogenase"/>
    <property type="match status" value="1"/>
</dbReference>
<dbReference type="Gene3D" id="3.40.605.10">
    <property type="entry name" value="Aldehyde Dehydrogenase, Chain A, domain 1"/>
    <property type="match status" value="1"/>
</dbReference>
<dbReference type="Gene3D" id="3.40.309.10">
    <property type="entry name" value="Aldehyde Dehydrogenase, Chain A, domain 2"/>
    <property type="match status" value="1"/>
</dbReference>
<dbReference type="HAMAP" id="MF_01174">
    <property type="entry name" value="Aldedh_AstD"/>
    <property type="match status" value="1"/>
</dbReference>
<dbReference type="InterPro" id="IPR016161">
    <property type="entry name" value="Ald_DH/histidinol_DH"/>
</dbReference>
<dbReference type="InterPro" id="IPR016163">
    <property type="entry name" value="Ald_DH_C"/>
</dbReference>
<dbReference type="InterPro" id="IPR016160">
    <property type="entry name" value="Ald_DH_CS_CYS"/>
</dbReference>
<dbReference type="InterPro" id="IPR029510">
    <property type="entry name" value="Ald_DH_CS_GLU"/>
</dbReference>
<dbReference type="InterPro" id="IPR016162">
    <property type="entry name" value="Ald_DH_N"/>
</dbReference>
<dbReference type="InterPro" id="IPR015590">
    <property type="entry name" value="Aldehyde_DH_dom"/>
</dbReference>
<dbReference type="InterPro" id="IPR017649">
    <property type="entry name" value="SuccinylGlu_semiald_DH_AstD"/>
</dbReference>
<dbReference type="NCBIfam" id="TIGR03240">
    <property type="entry name" value="arg_catab_astD"/>
    <property type="match status" value="1"/>
</dbReference>
<dbReference type="NCBIfam" id="NF006992">
    <property type="entry name" value="PRK09457.1"/>
    <property type="match status" value="1"/>
</dbReference>
<dbReference type="PANTHER" id="PTHR11699">
    <property type="entry name" value="ALDEHYDE DEHYDROGENASE-RELATED"/>
    <property type="match status" value="1"/>
</dbReference>
<dbReference type="Pfam" id="PF00171">
    <property type="entry name" value="Aldedh"/>
    <property type="match status" value="1"/>
</dbReference>
<dbReference type="SUPFAM" id="SSF53720">
    <property type="entry name" value="ALDH-like"/>
    <property type="match status" value="1"/>
</dbReference>
<dbReference type="PROSITE" id="PS00070">
    <property type="entry name" value="ALDEHYDE_DEHYDR_CYS"/>
    <property type="match status" value="1"/>
</dbReference>
<dbReference type="PROSITE" id="PS00687">
    <property type="entry name" value="ALDEHYDE_DEHYDR_GLU"/>
    <property type="match status" value="1"/>
</dbReference>
<protein>
    <recommendedName>
        <fullName evidence="1">N-succinylglutamate 5-semialdehyde dehydrogenase</fullName>
        <ecNumber evidence="1">1.2.1.71</ecNumber>
    </recommendedName>
    <alternativeName>
        <fullName evidence="1">Succinylglutamic semialdehyde dehydrogenase</fullName>
        <shortName evidence="1">SGSD</shortName>
    </alternativeName>
</protein>
<organism>
    <name type="scientific">Enterobacter sp. (strain 638)</name>
    <dbReference type="NCBI Taxonomy" id="399742"/>
    <lineage>
        <taxon>Bacteria</taxon>
        <taxon>Pseudomonadati</taxon>
        <taxon>Pseudomonadota</taxon>
        <taxon>Gammaproteobacteria</taxon>
        <taxon>Enterobacterales</taxon>
        <taxon>Enterobacteriaceae</taxon>
        <taxon>Enterobacter</taxon>
    </lineage>
</organism>